<proteinExistence type="inferred from homology"/>
<organism>
    <name type="scientific">Pseudomonas putida (strain ATCC 47054 / DSM 6125 / CFBP 8728 / NCIMB 11950 / KT2440)</name>
    <dbReference type="NCBI Taxonomy" id="160488"/>
    <lineage>
        <taxon>Bacteria</taxon>
        <taxon>Pseudomonadati</taxon>
        <taxon>Pseudomonadota</taxon>
        <taxon>Gammaproteobacteria</taxon>
        <taxon>Pseudomonadales</taxon>
        <taxon>Pseudomonadaceae</taxon>
        <taxon>Pseudomonas</taxon>
    </lineage>
</organism>
<gene>
    <name evidence="1" type="primary">atpF</name>
    <name type="ordered locus">PP_5417</name>
</gene>
<feature type="chain" id="PRO_0000368691" description="ATP synthase subunit b">
    <location>
        <begin position="1"/>
        <end position="156"/>
    </location>
</feature>
<feature type="transmembrane region" description="Helical" evidence="1">
    <location>
        <begin position="12"/>
        <end position="32"/>
    </location>
</feature>
<protein>
    <recommendedName>
        <fullName evidence="1">ATP synthase subunit b</fullName>
    </recommendedName>
    <alternativeName>
        <fullName evidence="1">ATP synthase F(0) sector subunit b</fullName>
    </alternativeName>
    <alternativeName>
        <fullName evidence="1">ATPase subunit I</fullName>
    </alternativeName>
    <alternativeName>
        <fullName evidence="1">F-type ATPase subunit b</fullName>
        <shortName evidence="1">F-ATPase subunit b</shortName>
    </alternativeName>
</protein>
<reference key="1">
    <citation type="journal article" date="2002" name="Environ. Microbiol.">
        <title>Complete genome sequence and comparative analysis of the metabolically versatile Pseudomonas putida KT2440.</title>
        <authorList>
            <person name="Nelson K.E."/>
            <person name="Weinel C."/>
            <person name="Paulsen I.T."/>
            <person name="Dodson R.J."/>
            <person name="Hilbert H."/>
            <person name="Martins dos Santos V.A.P."/>
            <person name="Fouts D.E."/>
            <person name="Gill S.R."/>
            <person name="Pop M."/>
            <person name="Holmes M."/>
            <person name="Brinkac L.M."/>
            <person name="Beanan M.J."/>
            <person name="DeBoy R.T."/>
            <person name="Daugherty S.C."/>
            <person name="Kolonay J.F."/>
            <person name="Madupu R."/>
            <person name="Nelson W.C."/>
            <person name="White O."/>
            <person name="Peterson J.D."/>
            <person name="Khouri H.M."/>
            <person name="Hance I."/>
            <person name="Chris Lee P."/>
            <person name="Holtzapple E.K."/>
            <person name="Scanlan D."/>
            <person name="Tran K."/>
            <person name="Moazzez A."/>
            <person name="Utterback T.R."/>
            <person name="Rizzo M."/>
            <person name="Lee K."/>
            <person name="Kosack D."/>
            <person name="Moestl D."/>
            <person name="Wedler H."/>
            <person name="Lauber J."/>
            <person name="Stjepandic D."/>
            <person name="Hoheisel J."/>
            <person name="Straetz M."/>
            <person name="Heim S."/>
            <person name="Kiewitz C."/>
            <person name="Eisen J.A."/>
            <person name="Timmis K.N."/>
            <person name="Duesterhoeft A."/>
            <person name="Tuemmler B."/>
            <person name="Fraser C.M."/>
        </authorList>
    </citation>
    <scope>NUCLEOTIDE SEQUENCE [LARGE SCALE GENOMIC DNA]</scope>
    <source>
        <strain>ATCC 47054 / DSM 6125 / CFBP 8728 / NCIMB 11950 / KT2440</strain>
    </source>
</reference>
<dbReference type="EMBL" id="AE015451">
    <property type="protein sequence ID" value="AAN70981.1"/>
    <property type="molecule type" value="Genomic_DNA"/>
</dbReference>
<dbReference type="RefSeq" id="NP_747517.1">
    <property type="nucleotide sequence ID" value="NC_002947.4"/>
</dbReference>
<dbReference type="RefSeq" id="WP_010955888.1">
    <property type="nucleotide sequence ID" value="NZ_CP169744.1"/>
</dbReference>
<dbReference type="SMR" id="Q88BX0"/>
<dbReference type="STRING" id="160488.PP_5417"/>
<dbReference type="PaxDb" id="160488-PP_5417"/>
<dbReference type="KEGG" id="ppu:PP_5417"/>
<dbReference type="PATRIC" id="fig|160488.4.peg.5785"/>
<dbReference type="eggNOG" id="COG0711">
    <property type="taxonomic scope" value="Bacteria"/>
</dbReference>
<dbReference type="HOGENOM" id="CLU_079215_4_5_6"/>
<dbReference type="OrthoDB" id="9788020at2"/>
<dbReference type="PhylomeDB" id="Q88BX0"/>
<dbReference type="BioCyc" id="PPUT160488:G1G01-5783-MONOMER"/>
<dbReference type="Proteomes" id="UP000000556">
    <property type="component" value="Chromosome"/>
</dbReference>
<dbReference type="GO" id="GO:0005886">
    <property type="term" value="C:plasma membrane"/>
    <property type="evidence" value="ECO:0007669"/>
    <property type="project" value="UniProtKB-SubCell"/>
</dbReference>
<dbReference type="GO" id="GO:0045259">
    <property type="term" value="C:proton-transporting ATP synthase complex"/>
    <property type="evidence" value="ECO:0007669"/>
    <property type="project" value="UniProtKB-KW"/>
</dbReference>
<dbReference type="GO" id="GO:0046933">
    <property type="term" value="F:proton-transporting ATP synthase activity, rotational mechanism"/>
    <property type="evidence" value="ECO:0007669"/>
    <property type="project" value="UniProtKB-UniRule"/>
</dbReference>
<dbReference type="GO" id="GO:0046961">
    <property type="term" value="F:proton-transporting ATPase activity, rotational mechanism"/>
    <property type="evidence" value="ECO:0007669"/>
    <property type="project" value="TreeGrafter"/>
</dbReference>
<dbReference type="CDD" id="cd06503">
    <property type="entry name" value="ATP-synt_Fo_b"/>
    <property type="match status" value="1"/>
</dbReference>
<dbReference type="Gene3D" id="6.10.250.1580">
    <property type="match status" value="1"/>
</dbReference>
<dbReference type="HAMAP" id="MF_01398">
    <property type="entry name" value="ATP_synth_b_bprime"/>
    <property type="match status" value="1"/>
</dbReference>
<dbReference type="InterPro" id="IPR028987">
    <property type="entry name" value="ATP_synth_B-like_membr_sf"/>
</dbReference>
<dbReference type="InterPro" id="IPR002146">
    <property type="entry name" value="ATP_synth_b/b'su_bac/chlpt"/>
</dbReference>
<dbReference type="InterPro" id="IPR005864">
    <property type="entry name" value="ATP_synth_F0_bsu_bac"/>
</dbReference>
<dbReference type="InterPro" id="IPR050059">
    <property type="entry name" value="ATP_synthase_B_chain"/>
</dbReference>
<dbReference type="NCBIfam" id="TIGR01144">
    <property type="entry name" value="ATP_synt_b"/>
    <property type="match status" value="1"/>
</dbReference>
<dbReference type="NCBIfam" id="NF004411">
    <property type="entry name" value="PRK05759.1-2"/>
    <property type="match status" value="1"/>
</dbReference>
<dbReference type="NCBIfam" id="NF004413">
    <property type="entry name" value="PRK05759.1-4"/>
    <property type="match status" value="1"/>
</dbReference>
<dbReference type="PANTHER" id="PTHR33445:SF1">
    <property type="entry name" value="ATP SYNTHASE SUBUNIT B"/>
    <property type="match status" value="1"/>
</dbReference>
<dbReference type="PANTHER" id="PTHR33445">
    <property type="entry name" value="ATP SYNTHASE SUBUNIT B', CHLOROPLASTIC"/>
    <property type="match status" value="1"/>
</dbReference>
<dbReference type="Pfam" id="PF00430">
    <property type="entry name" value="ATP-synt_B"/>
    <property type="match status" value="1"/>
</dbReference>
<dbReference type="SUPFAM" id="SSF81573">
    <property type="entry name" value="F1F0 ATP synthase subunit B, membrane domain"/>
    <property type="match status" value="1"/>
</dbReference>
<comment type="function">
    <text evidence="1">F(1)F(0) ATP synthase produces ATP from ADP in the presence of a proton or sodium gradient. F-type ATPases consist of two structural domains, F(1) containing the extramembraneous catalytic core and F(0) containing the membrane proton channel, linked together by a central stalk and a peripheral stalk. During catalysis, ATP synthesis in the catalytic domain of F(1) is coupled via a rotary mechanism of the central stalk subunits to proton translocation.</text>
</comment>
<comment type="function">
    <text evidence="1">Component of the F(0) channel, it forms part of the peripheral stalk, linking F(1) to F(0).</text>
</comment>
<comment type="subunit">
    <text evidence="1">F-type ATPases have 2 components, F(1) - the catalytic core - and F(0) - the membrane proton channel. F(1) has five subunits: alpha(3), beta(3), gamma(1), delta(1), epsilon(1). F(0) has three main subunits: a(1), b(2) and c(10-14). The alpha and beta chains form an alternating ring which encloses part of the gamma chain. F(1) is attached to F(0) by a central stalk formed by the gamma and epsilon chains, while a peripheral stalk is formed by the delta and b chains.</text>
</comment>
<comment type="subcellular location">
    <subcellularLocation>
        <location evidence="1">Cell inner membrane</location>
        <topology evidence="1">Single-pass membrane protein</topology>
    </subcellularLocation>
</comment>
<comment type="similarity">
    <text evidence="1">Belongs to the ATPase B chain family.</text>
</comment>
<sequence>MNINATLIGQSVAFLIFVLFCMKYVWPPVITALQERQKKIADGLDAANRAARDLELAQEKAGQQLREAKAQAAEIIEQSKKRAAQLVDEAREQARVEADRVKAQALAEIEQELNSAKDALRAQVGALAVGGAEKILGATIDQNAHAELVNKLAAEI</sequence>
<accession>Q88BX0</accession>
<keyword id="KW-0066">ATP synthesis</keyword>
<keyword id="KW-0997">Cell inner membrane</keyword>
<keyword id="KW-1003">Cell membrane</keyword>
<keyword id="KW-0138">CF(0)</keyword>
<keyword id="KW-0375">Hydrogen ion transport</keyword>
<keyword id="KW-0406">Ion transport</keyword>
<keyword id="KW-0472">Membrane</keyword>
<keyword id="KW-1185">Reference proteome</keyword>
<keyword id="KW-0812">Transmembrane</keyword>
<keyword id="KW-1133">Transmembrane helix</keyword>
<keyword id="KW-0813">Transport</keyword>
<evidence type="ECO:0000255" key="1">
    <source>
        <dbReference type="HAMAP-Rule" id="MF_01398"/>
    </source>
</evidence>
<name>ATPF_PSEPK</name>